<evidence type="ECO:0000255" key="1">
    <source>
        <dbReference type="HAMAP-Rule" id="MF_00011"/>
    </source>
</evidence>
<gene>
    <name evidence="1" type="primary">purA</name>
    <name type="ordered locus">Glov_3251</name>
</gene>
<accession>B3EAS4</accession>
<comment type="function">
    <text evidence="1">Plays an important role in the de novo pathway of purine nucleotide biosynthesis. Catalyzes the first committed step in the biosynthesis of AMP from IMP.</text>
</comment>
<comment type="catalytic activity">
    <reaction evidence="1">
        <text>IMP + L-aspartate + GTP = N(6)-(1,2-dicarboxyethyl)-AMP + GDP + phosphate + 2 H(+)</text>
        <dbReference type="Rhea" id="RHEA:15753"/>
        <dbReference type="ChEBI" id="CHEBI:15378"/>
        <dbReference type="ChEBI" id="CHEBI:29991"/>
        <dbReference type="ChEBI" id="CHEBI:37565"/>
        <dbReference type="ChEBI" id="CHEBI:43474"/>
        <dbReference type="ChEBI" id="CHEBI:57567"/>
        <dbReference type="ChEBI" id="CHEBI:58053"/>
        <dbReference type="ChEBI" id="CHEBI:58189"/>
        <dbReference type="EC" id="6.3.4.4"/>
    </reaction>
</comment>
<comment type="cofactor">
    <cofactor evidence="1">
        <name>Mg(2+)</name>
        <dbReference type="ChEBI" id="CHEBI:18420"/>
    </cofactor>
    <text evidence="1">Binds 1 Mg(2+) ion per subunit.</text>
</comment>
<comment type="pathway">
    <text evidence="1">Purine metabolism; AMP biosynthesis via de novo pathway; AMP from IMP: step 1/2.</text>
</comment>
<comment type="subunit">
    <text evidence="1">Homodimer.</text>
</comment>
<comment type="subcellular location">
    <subcellularLocation>
        <location evidence="1">Cytoplasm</location>
    </subcellularLocation>
</comment>
<comment type="similarity">
    <text evidence="1">Belongs to the adenylosuccinate synthetase family.</text>
</comment>
<reference key="1">
    <citation type="submission" date="2008-05" db="EMBL/GenBank/DDBJ databases">
        <title>Complete sequence of chromosome of Geobacter lovleyi SZ.</title>
        <authorList>
            <consortium name="US DOE Joint Genome Institute"/>
            <person name="Lucas S."/>
            <person name="Copeland A."/>
            <person name="Lapidus A."/>
            <person name="Glavina del Rio T."/>
            <person name="Dalin E."/>
            <person name="Tice H."/>
            <person name="Bruce D."/>
            <person name="Goodwin L."/>
            <person name="Pitluck S."/>
            <person name="Chertkov O."/>
            <person name="Meincke L."/>
            <person name="Brettin T."/>
            <person name="Detter J.C."/>
            <person name="Han C."/>
            <person name="Tapia R."/>
            <person name="Kuske C.R."/>
            <person name="Schmutz J."/>
            <person name="Larimer F."/>
            <person name="Land M."/>
            <person name="Hauser L."/>
            <person name="Kyrpides N."/>
            <person name="Mikhailova N."/>
            <person name="Sung Y."/>
            <person name="Fletcher K.E."/>
            <person name="Ritalahti K.M."/>
            <person name="Loeffler F.E."/>
            <person name="Richardson P."/>
        </authorList>
    </citation>
    <scope>NUCLEOTIDE SEQUENCE [LARGE SCALE GENOMIC DNA]</scope>
    <source>
        <strain>ATCC BAA-1151 / DSM 17278 / SZ</strain>
    </source>
</reference>
<keyword id="KW-0963">Cytoplasm</keyword>
<keyword id="KW-0342">GTP-binding</keyword>
<keyword id="KW-0436">Ligase</keyword>
<keyword id="KW-0460">Magnesium</keyword>
<keyword id="KW-0479">Metal-binding</keyword>
<keyword id="KW-0547">Nucleotide-binding</keyword>
<keyword id="KW-0658">Purine biosynthesis</keyword>
<keyword id="KW-1185">Reference proteome</keyword>
<feature type="chain" id="PRO_1000089298" description="Adenylosuccinate synthetase">
    <location>
        <begin position="1"/>
        <end position="430"/>
    </location>
</feature>
<feature type="active site" description="Proton acceptor" evidence="1">
    <location>
        <position position="13"/>
    </location>
</feature>
<feature type="active site" description="Proton donor" evidence="1">
    <location>
        <position position="41"/>
    </location>
</feature>
<feature type="binding site" evidence="1">
    <location>
        <begin position="12"/>
        <end position="18"/>
    </location>
    <ligand>
        <name>GTP</name>
        <dbReference type="ChEBI" id="CHEBI:37565"/>
    </ligand>
</feature>
<feature type="binding site" description="in other chain" evidence="1">
    <location>
        <begin position="13"/>
        <end position="16"/>
    </location>
    <ligand>
        <name>IMP</name>
        <dbReference type="ChEBI" id="CHEBI:58053"/>
        <note>ligand shared between dimeric partners</note>
    </ligand>
</feature>
<feature type="binding site" evidence="1">
    <location>
        <position position="13"/>
    </location>
    <ligand>
        <name>Mg(2+)</name>
        <dbReference type="ChEBI" id="CHEBI:18420"/>
    </ligand>
</feature>
<feature type="binding site" description="in other chain" evidence="1">
    <location>
        <begin position="38"/>
        <end position="41"/>
    </location>
    <ligand>
        <name>IMP</name>
        <dbReference type="ChEBI" id="CHEBI:58053"/>
        <note>ligand shared between dimeric partners</note>
    </ligand>
</feature>
<feature type="binding site" evidence="1">
    <location>
        <begin position="40"/>
        <end position="42"/>
    </location>
    <ligand>
        <name>GTP</name>
        <dbReference type="ChEBI" id="CHEBI:37565"/>
    </ligand>
</feature>
<feature type="binding site" evidence="1">
    <location>
        <position position="40"/>
    </location>
    <ligand>
        <name>Mg(2+)</name>
        <dbReference type="ChEBI" id="CHEBI:18420"/>
    </ligand>
</feature>
<feature type="binding site" description="in other chain" evidence="1">
    <location>
        <position position="130"/>
    </location>
    <ligand>
        <name>IMP</name>
        <dbReference type="ChEBI" id="CHEBI:58053"/>
        <note>ligand shared between dimeric partners</note>
    </ligand>
</feature>
<feature type="binding site" evidence="1">
    <location>
        <position position="144"/>
    </location>
    <ligand>
        <name>IMP</name>
        <dbReference type="ChEBI" id="CHEBI:58053"/>
        <note>ligand shared between dimeric partners</note>
    </ligand>
</feature>
<feature type="binding site" description="in other chain" evidence="1">
    <location>
        <position position="224"/>
    </location>
    <ligand>
        <name>IMP</name>
        <dbReference type="ChEBI" id="CHEBI:58053"/>
        <note>ligand shared between dimeric partners</note>
    </ligand>
</feature>
<feature type="binding site" description="in other chain" evidence="1">
    <location>
        <position position="239"/>
    </location>
    <ligand>
        <name>IMP</name>
        <dbReference type="ChEBI" id="CHEBI:58053"/>
        <note>ligand shared between dimeric partners</note>
    </ligand>
</feature>
<feature type="binding site" evidence="1">
    <location>
        <begin position="299"/>
        <end position="305"/>
    </location>
    <ligand>
        <name>substrate</name>
    </ligand>
</feature>
<feature type="binding site" description="in other chain" evidence="1">
    <location>
        <position position="303"/>
    </location>
    <ligand>
        <name>IMP</name>
        <dbReference type="ChEBI" id="CHEBI:58053"/>
        <note>ligand shared between dimeric partners</note>
    </ligand>
</feature>
<feature type="binding site" evidence="1">
    <location>
        <position position="305"/>
    </location>
    <ligand>
        <name>GTP</name>
        <dbReference type="ChEBI" id="CHEBI:37565"/>
    </ligand>
</feature>
<feature type="binding site" evidence="1">
    <location>
        <begin position="331"/>
        <end position="333"/>
    </location>
    <ligand>
        <name>GTP</name>
        <dbReference type="ChEBI" id="CHEBI:37565"/>
    </ligand>
</feature>
<feature type="binding site" evidence="1">
    <location>
        <begin position="413"/>
        <end position="415"/>
    </location>
    <ligand>
        <name>GTP</name>
        <dbReference type="ChEBI" id="CHEBI:37565"/>
    </ligand>
</feature>
<proteinExistence type="inferred from homology"/>
<name>PURA_TRIL1</name>
<sequence length="430" mass="47222">MANVVVVGAQWGDEGKGKVVDIYTEYADEIVRYQGGNNAGHTLVVGEEKVVLHLIPSGVLHAGKRCVIGNGVVLDPEVFIMEVNRLKAAGRLEDDSTLLLSESLHIIMPYHKAIDIAREAKSGDKKIGTTGRGIGPCYEDKIGRRGIRLMDLIDPVAFSRKLRENLEEKNAILERLGEEPLGYNEIYRTYQDFAEILKKYMADTSLVLSKSVAAGKKLLFEGAQGTLLDVDHGTYPFVTSSSTCAGGAATGTGVSPREIHEVVGISKAYVTRVGSGPFPTELLDETGEKLRQVGGEFGATTGRPRRCGWFDAMVIRYAVRINGLTGIALTKLDVLSDFETIKVCTGYRFEGQELETLPAKLETFENCEPVYEELPGWKVDITGVRSYDQLPENAKKYVRRLEELAGCPIVMVSVGPRRDQTMMIKNPFGE</sequence>
<organism>
    <name type="scientific">Trichlorobacter lovleyi (strain ATCC BAA-1151 / DSM 17278 / SZ)</name>
    <name type="common">Geobacter lovleyi</name>
    <dbReference type="NCBI Taxonomy" id="398767"/>
    <lineage>
        <taxon>Bacteria</taxon>
        <taxon>Pseudomonadati</taxon>
        <taxon>Thermodesulfobacteriota</taxon>
        <taxon>Desulfuromonadia</taxon>
        <taxon>Geobacterales</taxon>
        <taxon>Geobacteraceae</taxon>
        <taxon>Trichlorobacter</taxon>
    </lineage>
</organism>
<protein>
    <recommendedName>
        <fullName evidence="1">Adenylosuccinate synthetase</fullName>
        <shortName evidence="1">AMPSase</shortName>
        <shortName evidence="1">AdSS</shortName>
        <ecNumber evidence="1">6.3.4.4</ecNumber>
    </recommendedName>
    <alternativeName>
        <fullName evidence="1">IMP--aspartate ligase</fullName>
    </alternativeName>
</protein>
<dbReference type="EC" id="6.3.4.4" evidence="1"/>
<dbReference type="EMBL" id="CP001089">
    <property type="protein sequence ID" value="ACD96957.1"/>
    <property type="molecule type" value="Genomic_DNA"/>
</dbReference>
<dbReference type="RefSeq" id="WP_012471281.1">
    <property type="nucleotide sequence ID" value="NC_010814.1"/>
</dbReference>
<dbReference type="SMR" id="B3EAS4"/>
<dbReference type="STRING" id="398767.Glov_3251"/>
<dbReference type="KEGG" id="glo:Glov_3251"/>
<dbReference type="eggNOG" id="COG0104">
    <property type="taxonomic scope" value="Bacteria"/>
</dbReference>
<dbReference type="HOGENOM" id="CLU_029848_0_0_7"/>
<dbReference type="OrthoDB" id="9807553at2"/>
<dbReference type="UniPathway" id="UPA00075">
    <property type="reaction ID" value="UER00335"/>
</dbReference>
<dbReference type="Proteomes" id="UP000002420">
    <property type="component" value="Chromosome"/>
</dbReference>
<dbReference type="GO" id="GO:0005737">
    <property type="term" value="C:cytoplasm"/>
    <property type="evidence" value="ECO:0007669"/>
    <property type="project" value="UniProtKB-SubCell"/>
</dbReference>
<dbReference type="GO" id="GO:0004019">
    <property type="term" value="F:adenylosuccinate synthase activity"/>
    <property type="evidence" value="ECO:0007669"/>
    <property type="project" value="UniProtKB-UniRule"/>
</dbReference>
<dbReference type="GO" id="GO:0005525">
    <property type="term" value="F:GTP binding"/>
    <property type="evidence" value="ECO:0007669"/>
    <property type="project" value="UniProtKB-UniRule"/>
</dbReference>
<dbReference type="GO" id="GO:0000287">
    <property type="term" value="F:magnesium ion binding"/>
    <property type="evidence" value="ECO:0007669"/>
    <property type="project" value="UniProtKB-UniRule"/>
</dbReference>
<dbReference type="GO" id="GO:0044208">
    <property type="term" value="P:'de novo' AMP biosynthetic process"/>
    <property type="evidence" value="ECO:0007669"/>
    <property type="project" value="UniProtKB-UniRule"/>
</dbReference>
<dbReference type="GO" id="GO:0046040">
    <property type="term" value="P:IMP metabolic process"/>
    <property type="evidence" value="ECO:0007669"/>
    <property type="project" value="TreeGrafter"/>
</dbReference>
<dbReference type="CDD" id="cd03108">
    <property type="entry name" value="AdSS"/>
    <property type="match status" value="1"/>
</dbReference>
<dbReference type="FunFam" id="1.10.300.10:FF:000001">
    <property type="entry name" value="Adenylosuccinate synthetase"/>
    <property type="match status" value="1"/>
</dbReference>
<dbReference type="FunFam" id="3.90.170.10:FF:000001">
    <property type="entry name" value="Adenylosuccinate synthetase"/>
    <property type="match status" value="1"/>
</dbReference>
<dbReference type="Gene3D" id="3.40.440.10">
    <property type="entry name" value="Adenylosuccinate Synthetase, subunit A, domain 1"/>
    <property type="match status" value="1"/>
</dbReference>
<dbReference type="Gene3D" id="1.10.300.10">
    <property type="entry name" value="Adenylosuccinate Synthetase, subunit A, domain 2"/>
    <property type="match status" value="1"/>
</dbReference>
<dbReference type="Gene3D" id="3.90.170.10">
    <property type="entry name" value="Adenylosuccinate Synthetase, subunit A, domain 3"/>
    <property type="match status" value="1"/>
</dbReference>
<dbReference type="HAMAP" id="MF_00011">
    <property type="entry name" value="Adenylosucc_synth"/>
    <property type="match status" value="1"/>
</dbReference>
<dbReference type="InterPro" id="IPR018220">
    <property type="entry name" value="Adenylosuccin_syn_GTP-bd"/>
</dbReference>
<dbReference type="InterPro" id="IPR033128">
    <property type="entry name" value="Adenylosuccin_syn_Lys_AS"/>
</dbReference>
<dbReference type="InterPro" id="IPR042109">
    <property type="entry name" value="Adenylosuccinate_synth_dom1"/>
</dbReference>
<dbReference type="InterPro" id="IPR042110">
    <property type="entry name" value="Adenylosuccinate_synth_dom2"/>
</dbReference>
<dbReference type="InterPro" id="IPR042111">
    <property type="entry name" value="Adenylosuccinate_synth_dom3"/>
</dbReference>
<dbReference type="InterPro" id="IPR001114">
    <property type="entry name" value="Adenylosuccinate_synthetase"/>
</dbReference>
<dbReference type="InterPro" id="IPR027417">
    <property type="entry name" value="P-loop_NTPase"/>
</dbReference>
<dbReference type="NCBIfam" id="NF002223">
    <property type="entry name" value="PRK01117.1"/>
    <property type="match status" value="1"/>
</dbReference>
<dbReference type="NCBIfam" id="TIGR00184">
    <property type="entry name" value="purA"/>
    <property type="match status" value="1"/>
</dbReference>
<dbReference type="PANTHER" id="PTHR11846">
    <property type="entry name" value="ADENYLOSUCCINATE SYNTHETASE"/>
    <property type="match status" value="1"/>
</dbReference>
<dbReference type="PANTHER" id="PTHR11846:SF0">
    <property type="entry name" value="ADENYLOSUCCINATE SYNTHETASE"/>
    <property type="match status" value="1"/>
</dbReference>
<dbReference type="Pfam" id="PF00709">
    <property type="entry name" value="Adenylsucc_synt"/>
    <property type="match status" value="1"/>
</dbReference>
<dbReference type="SMART" id="SM00788">
    <property type="entry name" value="Adenylsucc_synt"/>
    <property type="match status" value="1"/>
</dbReference>
<dbReference type="SUPFAM" id="SSF52540">
    <property type="entry name" value="P-loop containing nucleoside triphosphate hydrolases"/>
    <property type="match status" value="1"/>
</dbReference>
<dbReference type="PROSITE" id="PS01266">
    <property type="entry name" value="ADENYLOSUCCIN_SYN_1"/>
    <property type="match status" value="1"/>
</dbReference>
<dbReference type="PROSITE" id="PS00513">
    <property type="entry name" value="ADENYLOSUCCIN_SYN_2"/>
    <property type="match status" value="1"/>
</dbReference>